<accession>Q1GNH1</accession>
<dbReference type="EC" id="1.5.1.5" evidence="1"/>
<dbReference type="EC" id="3.5.4.9" evidence="1"/>
<dbReference type="EMBL" id="CP000356">
    <property type="protein sequence ID" value="ABF54801.1"/>
    <property type="molecule type" value="Genomic_DNA"/>
</dbReference>
<dbReference type="RefSeq" id="WP_011543363.1">
    <property type="nucleotide sequence ID" value="NC_008048.1"/>
</dbReference>
<dbReference type="SMR" id="Q1GNH1"/>
<dbReference type="STRING" id="317655.Sala_3097"/>
<dbReference type="KEGG" id="sal:Sala_3097"/>
<dbReference type="eggNOG" id="COG0190">
    <property type="taxonomic scope" value="Bacteria"/>
</dbReference>
<dbReference type="HOGENOM" id="CLU_034045_2_1_5"/>
<dbReference type="OrthoDB" id="9803580at2"/>
<dbReference type="UniPathway" id="UPA00193"/>
<dbReference type="Proteomes" id="UP000006578">
    <property type="component" value="Chromosome"/>
</dbReference>
<dbReference type="GO" id="GO:0005829">
    <property type="term" value="C:cytosol"/>
    <property type="evidence" value="ECO:0007669"/>
    <property type="project" value="TreeGrafter"/>
</dbReference>
<dbReference type="GO" id="GO:0004477">
    <property type="term" value="F:methenyltetrahydrofolate cyclohydrolase activity"/>
    <property type="evidence" value="ECO:0007669"/>
    <property type="project" value="UniProtKB-UniRule"/>
</dbReference>
<dbReference type="GO" id="GO:0004488">
    <property type="term" value="F:methylenetetrahydrofolate dehydrogenase (NADP+) activity"/>
    <property type="evidence" value="ECO:0007669"/>
    <property type="project" value="UniProtKB-UniRule"/>
</dbReference>
<dbReference type="GO" id="GO:0000105">
    <property type="term" value="P:L-histidine biosynthetic process"/>
    <property type="evidence" value="ECO:0007669"/>
    <property type="project" value="UniProtKB-KW"/>
</dbReference>
<dbReference type="GO" id="GO:0009086">
    <property type="term" value="P:methionine biosynthetic process"/>
    <property type="evidence" value="ECO:0007669"/>
    <property type="project" value="UniProtKB-KW"/>
</dbReference>
<dbReference type="GO" id="GO:0006164">
    <property type="term" value="P:purine nucleotide biosynthetic process"/>
    <property type="evidence" value="ECO:0007669"/>
    <property type="project" value="UniProtKB-KW"/>
</dbReference>
<dbReference type="GO" id="GO:0035999">
    <property type="term" value="P:tetrahydrofolate interconversion"/>
    <property type="evidence" value="ECO:0007669"/>
    <property type="project" value="UniProtKB-UniRule"/>
</dbReference>
<dbReference type="CDD" id="cd01080">
    <property type="entry name" value="NAD_bind_m-THF_DH_Cyclohyd"/>
    <property type="match status" value="1"/>
</dbReference>
<dbReference type="FunFam" id="3.40.50.720:FF:000006">
    <property type="entry name" value="Bifunctional protein FolD"/>
    <property type="match status" value="1"/>
</dbReference>
<dbReference type="FunFam" id="3.40.50.10860:FF:000005">
    <property type="entry name" value="C-1-tetrahydrofolate synthase, cytoplasmic, putative"/>
    <property type="match status" value="1"/>
</dbReference>
<dbReference type="Gene3D" id="3.40.50.10860">
    <property type="entry name" value="Leucine Dehydrogenase, chain A, domain 1"/>
    <property type="match status" value="1"/>
</dbReference>
<dbReference type="Gene3D" id="3.40.50.720">
    <property type="entry name" value="NAD(P)-binding Rossmann-like Domain"/>
    <property type="match status" value="1"/>
</dbReference>
<dbReference type="HAMAP" id="MF_01576">
    <property type="entry name" value="THF_DHG_CYH"/>
    <property type="match status" value="1"/>
</dbReference>
<dbReference type="InterPro" id="IPR046346">
    <property type="entry name" value="Aminoacid_DH-like_N_sf"/>
</dbReference>
<dbReference type="InterPro" id="IPR036291">
    <property type="entry name" value="NAD(P)-bd_dom_sf"/>
</dbReference>
<dbReference type="InterPro" id="IPR000672">
    <property type="entry name" value="THF_DH/CycHdrlase"/>
</dbReference>
<dbReference type="InterPro" id="IPR020630">
    <property type="entry name" value="THF_DH/CycHdrlase_cat_dom"/>
</dbReference>
<dbReference type="InterPro" id="IPR020867">
    <property type="entry name" value="THF_DH/CycHdrlase_CS"/>
</dbReference>
<dbReference type="InterPro" id="IPR020631">
    <property type="entry name" value="THF_DH/CycHdrlase_NAD-bd_dom"/>
</dbReference>
<dbReference type="NCBIfam" id="NF010783">
    <property type="entry name" value="PRK14186.1"/>
    <property type="match status" value="1"/>
</dbReference>
<dbReference type="NCBIfam" id="NF010785">
    <property type="entry name" value="PRK14188.1"/>
    <property type="match status" value="1"/>
</dbReference>
<dbReference type="PANTHER" id="PTHR48099:SF5">
    <property type="entry name" value="C-1-TETRAHYDROFOLATE SYNTHASE, CYTOPLASMIC"/>
    <property type="match status" value="1"/>
</dbReference>
<dbReference type="PANTHER" id="PTHR48099">
    <property type="entry name" value="C-1-TETRAHYDROFOLATE SYNTHASE, CYTOPLASMIC-RELATED"/>
    <property type="match status" value="1"/>
</dbReference>
<dbReference type="Pfam" id="PF00763">
    <property type="entry name" value="THF_DHG_CYH"/>
    <property type="match status" value="1"/>
</dbReference>
<dbReference type="Pfam" id="PF02882">
    <property type="entry name" value="THF_DHG_CYH_C"/>
    <property type="match status" value="1"/>
</dbReference>
<dbReference type="PRINTS" id="PR00085">
    <property type="entry name" value="THFDHDRGNASE"/>
</dbReference>
<dbReference type="SUPFAM" id="SSF53223">
    <property type="entry name" value="Aminoacid dehydrogenase-like, N-terminal domain"/>
    <property type="match status" value="1"/>
</dbReference>
<dbReference type="SUPFAM" id="SSF51735">
    <property type="entry name" value="NAD(P)-binding Rossmann-fold domains"/>
    <property type="match status" value="1"/>
</dbReference>
<dbReference type="PROSITE" id="PS00767">
    <property type="entry name" value="THF_DHG_CYH_2"/>
    <property type="match status" value="1"/>
</dbReference>
<gene>
    <name evidence="1" type="primary">folD</name>
    <name type="ordered locus">Sala_3097</name>
</gene>
<feature type="chain" id="PRO_0000268506" description="Bifunctional protein FolD">
    <location>
        <begin position="1"/>
        <end position="302"/>
    </location>
</feature>
<feature type="binding site" evidence="1">
    <location>
        <begin position="171"/>
        <end position="173"/>
    </location>
    <ligand>
        <name>NADP(+)</name>
        <dbReference type="ChEBI" id="CHEBI:58349"/>
    </ligand>
</feature>
<feature type="binding site" evidence="1">
    <location>
        <position position="196"/>
    </location>
    <ligand>
        <name>NADP(+)</name>
        <dbReference type="ChEBI" id="CHEBI:58349"/>
    </ligand>
</feature>
<feature type="binding site" evidence="1">
    <location>
        <position position="237"/>
    </location>
    <ligand>
        <name>NADP(+)</name>
        <dbReference type="ChEBI" id="CHEBI:58349"/>
    </ligand>
</feature>
<protein>
    <recommendedName>
        <fullName evidence="1">Bifunctional protein FolD</fullName>
    </recommendedName>
    <domain>
        <recommendedName>
            <fullName evidence="1">Methylenetetrahydrofolate dehydrogenase</fullName>
            <ecNumber evidence="1">1.5.1.5</ecNumber>
        </recommendedName>
    </domain>
    <domain>
        <recommendedName>
            <fullName evidence="1">Methenyltetrahydrofolate cyclohydrolase</fullName>
            <ecNumber evidence="1">3.5.4.9</ecNumber>
        </recommendedName>
    </domain>
</protein>
<sequence length="302" mass="30722">MTGPVPDARVIDGKAFAAGLRARIADAVPAFRAATGRAPGLAVVLVGDDPASAVYVGSKGKATVAAGMASFEHRLAATATQDEVEALLRQLNADEAVDGILLQLPLPGHLDEQAAVATIDPDKDVDGLTPVSAGRLALGIPGMVPCTPYGCLLLLQDRLGDLSGKDAIVIGRSILVGKPMGQLLLGANCTVTMAHSRTKDLPALVRRADIVVAAVGRAEMVKGDWIKPGAIVIDVGINRLPPADGAAKGRLVGDVDYAAALGVADAITPVPGGVGPMTIACLLRNTLVAAHRRAGLADPEGF</sequence>
<organism>
    <name type="scientific">Sphingopyxis alaskensis (strain DSM 13593 / LMG 18877 / RB2256)</name>
    <name type="common">Sphingomonas alaskensis</name>
    <dbReference type="NCBI Taxonomy" id="317655"/>
    <lineage>
        <taxon>Bacteria</taxon>
        <taxon>Pseudomonadati</taxon>
        <taxon>Pseudomonadota</taxon>
        <taxon>Alphaproteobacteria</taxon>
        <taxon>Sphingomonadales</taxon>
        <taxon>Sphingomonadaceae</taxon>
        <taxon>Sphingopyxis</taxon>
    </lineage>
</organism>
<comment type="function">
    <text evidence="1">Catalyzes the oxidation of 5,10-methylenetetrahydrofolate to 5,10-methenyltetrahydrofolate and then the hydrolysis of 5,10-methenyltetrahydrofolate to 10-formyltetrahydrofolate.</text>
</comment>
<comment type="catalytic activity">
    <reaction evidence="1">
        <text>(6R)-5,10-methylene-5,6,7,8-tetrahydrofolate + NADP(+) = (6R)-5,10-methenyltetrahydrofolate + NADPH</text>
        <dbReference type="Rhea" id="RHEA:22812"/>
        <dbReference type="ChEBI" id="CHEBI:15636"/>
        <dbReference type="ChEBI" id="CHEBI:57455"/>
        <dbReference type="ChEBI" id="CHEBI:57783"/>
        <dbReference type="ChEBI" id="CHEBI:58349"/>
        <dbReference type="EC" id="1.5.1.5"/>
    </reaction>
</comment>
<comment type="catalytic activity">
    <reaction evidence="1">
        <text>(6R)-5,10-methenyltetrahydrofolate + H2O = (6R)-10-formyltetrahydrofolate + H(+)</text>
        <dbReference type="Rhea" id="RHEA:23700"/>
        <dbReference type="ChEBI" id="CHEBI:15377"/>
        <dbReference type="ChEBI" id="CHEBI:15378"/>
        <dbReference type="ChEBI" id="CHEBI:57455"/>
        <dbReference type="ChEBI" id="CHEBI:195366"/>
        <dbReference type="EC" id="3.5.4.9"/>
    </reaction>
</comment>
<comment type="pathway">
    <text evidence="1">One-carbon metabolism; tetrahydrofolate interconversion.</text>
</comment>
<comment type="subunit">
    <text evidence="1">Homodimer.</text>
</comment>
<comment type="similarity">
    <text evidence="1">Belongs to the tetrahydrofolate dehydrogenase/cyclohydrolase family.</text>
</comment>
<proteinExistence type="inferred from homology"/>
<reference key="1">
    <citation type="journal article" date="2009" name="Proc. Natl. Acad. Sci. U.S.A.">
        <title>The genomic basis of trophic strategy in marine bacteria.</title>
        <authorList>
            <person name="Lauro F.M."/>
            <person name="McDougald D."/>
            <person name="Thomas T."/>
            <person name="Williams T.J."/>
            <person name="Egan S."/>
            <person name="Rice S."/>
            <person name="DeMaere M.Z."/>
            <person name="Ting L."/>
            <person name="Ertan H."/>
            <person name="Johnson J."/>
            <person name="Ferriera S."/>
            <person name="Lapidus A."/>
            <person name="Anderson I."/>
            <person name="Kyrpides N."/>
            <person name="Munk A.C."/>
            <person name="Detter C."/>
            <person name="Han C.S."/>
            <person name="Brown M.V."/>
            <person name="Robb F.T."/>
            <person name="Kjelleberg S."/>
            <person name="Cavicchioli R."/>
        </authorList>
    </citation>
    <scope>NUCLEOTIDE SEQUENCE [LARGE SCALE GENOMIC DNA]</scope>
    <source>
        <strain>DSM 13593 / LMG 18877 / RB2256</strain>
    </source>
</reference>
<evidence type="ECO:0000255" key="1">
    <source>
        <dbReference type="HAMAP-Rule" id="MF_01576"/>
    </source>
</evidence>
<name>FOLD_SPHAL</name>
<keyword id="KW-0028">Amino-acid biosynthesis</keyword>
<keyword id="KW-0368">Histidine biosynthesis</keyword>
<keyword id="KW-0378">Hydrolase</keyword>
<keyword id="KW-0486">Methionine biosynthesis</keyword>
<keyword id="KW-0511">Multifunctional enzyme</keyword>
<keyword id="KW-0521">NADP</keyword>
<keyword id="KW-0554">One-carbon metabolism</keyword>
<keyword id="KW-0560">Oxidoreductase</keyword>
<keyword id="KW-0658">Purine biosynthesis</keyword>
<keyword id="KW-1185">Reference proteome</keyword>